<reference key="1">
    <citation type="journal article" date="2004" name="Proteins">
        <title>Evolutionary trace analysis of scorpion toxins specific for K-channels.</title>
        <authorList>
            <person name="Zhu S.-Y."/>
            <person name="Huys I."/>
            <person name="Dyason K."/>
            <person name="Verdonck F."/>
            <person name="Tytgat J."/>
        </authorList>
    </citation>
    <scope>NUCLEOTIDE SEQUENCE [MRNA]</scope>
    <source>
        <tissue>Venom gland</tissue>
    </source>
</reference>
<organism>
    <name type="scientific">Opistophthalmus carinatus</name>
    <name type="common">African yellow leg scorpion</name>
    <dbReference type="NCBI Taxonomy" id="190115"/>
    <lineage>
        <taxon>Eukaryota</taxon>
        <taxon>Metazoa</taxon>
        <taxon>Ecdysozoa</taxon>
        <taxon>Arthropoda</taxon>
        <taxon>Chelicerata</taxon>
        <taxon>Arachnida</taxon>
        <taxon>Scorpiones</taxon>
        <taxon>Iurida</taxon>
        <taxon>Scorpionoidea</taxon>
        <taxon>Scorpionidae</taxon>
        <taxon>Opistophthalminae</taxon>
        <taxon>Opistophthalmus</taxon>
    </lineage>
</organism>
<name>KAX68_OPICA</name>
<sequence>MNAKFILLLLVVTTTILLPDTQGAEVIKCRTPKDCADPCRKQTGCPHAKCMNKTCRCHRCG</sequence>
<dbReference type="EMBL" id="AY225781">
    <property type="protein sequence ID" value="AAP73819.1"/>
    <property type="molecule type" value="mRNA"/>
</dbReference>
<dbReference type="SMR" id="Q6XLL7"/>
<dbReference type="GO" id="GO:0005576">
    <property type="term" value="C:extracellular region"/>
    <property type="evidence" value="ECO:0007669"/>
    <property type="project" value="UniProtKB-SubCell"/>
</dbReference>
<dbReference type="GO" id="GO:0008200">
    <property type="term" value="F:ion channel inhibitor activity"/>
    <property type="evidence" value="ECO:0007669"/>
    <property type="project" value="InterPro"/>
</dbReference>
<dbReference type="GO" id="GO:0015459">
    <property type="term" value="F:potassium channel regulator activity"/>
    <property type="evidence" value="ECO:0007669"/>
    <property type="project" value="UniProtKB-KW"/>
</dbReference>
<dbReference type="GO" id="GO:0090729">
    <property type="term" value="F:toxin activity"/>
    <property type="evidence" value="ECO:0007669"/>
    <property type="project" value="UniProtKB-KW"/>
</dbReference>
<dbReference type="Gene3D" id="3.30.30.10">
    <property type="entry name" value="Knottin, scorpion toxin-like"/>
    <property type="match status" value="1"/>
</dbReference>
<dbReference type="InterPro" id="IPR036574">
    <property type="entry name" value="Scorpion_toxin-like_sf"/>
</dbReference>
<dbReference type="InterPro" id="IPR001947">
    <property type="entry name" value="Scorpion_toxinS_K_inh"/>
</dbReference>
<dbReference type="Pfam" id="PF00451">
    <property type="entry name" value="Toxin_2"/>
    <property type="match status" value="1"/>
</dbReference>
<dbReference type="SUPFAM" id="SSF57095">
    <property type="entry name" value="Scorpion toxin-like"/>
    <property type="match status" value="1"/>
</dbReference>
<dbReference type="PROSITE" id="PS01138">
    <property type="entry name" value="SCORP_SHORT_TOXIN"/>
    <property type="match status" value="1"/>
</dbReference>
<accession>Q6XLL7</accession>
<feature type="signal peptide" evidence="3">
    <location>
        <begin position="1"/>
        <end position="23"/>
    </location>
</feature>
<feature type="chain" id="PRO_0000227033" description="Potassium channel toxin alpha-KTx 6.8">
    <location>
        <begin position="24"/>
        <end position="60"/>
    </location>
</feature>
<feature type="modified residue" description="Cysteine amide" evidence="2">
    <location>
        <position position="60"/>
    </location>
</feature>
<feature type="disulfide bond" evidence="2">
    <location>
        <begin position="29"/>
        <end position="50"/>
    </location>
</feature>
<feature type="disulfide bond" evidence="2">
    <location>
        <begin position="35"/>
        <end position="55"/>
    </location>
</feature>
<feature type="disulfide bond" evidence="2">
    <location>
        <begin position="39"/>
        <end position="57"/>
    </location>
</feature>
<feature type="disulfide bond" evidence="2">
    <location>
        <begin position="45"/>
        <end position="60"/>
    </location>
</feature>
<proteinExistence type="evidence at transcript level"/>
<keyword id="KW-0027">Amidation</keyword>
<keyword id="KW-1015">Disulfide bond</keyword>
<keyword id="KW-0872">Ion channel impairing toxin</keyword>
<keyword id="KW-0528">Neurotoxin</keyword>
<keyword id="KW-0632">Potassium channel impairing toxin</keyword>
<keyword id="KW-0964">Secreted</keyword>
<keyword id="KW-0732">Signal</keyword>
<keyword id="KW-0800">Toxin</keyword>
<protein>
    <recommendedName>
        <fullName evidence="4">Potassium channel toxin alpha-KTx 6.8</fullName>
    </recommendedName>
    <alternativeName>
        <fullName evidence="4">OcKTx3</fullName>
    </alternativeName>
</protein>
<comment type="function">
    <text evidence="1">Blocker of voltage-gated potassium channels.</text>
</comment>
<comment type="subcellular location">
    <subcellularLocation>
        <location evidence="1">Secreted</location>
    </subcellularLocation>
</comment>
<comment type="tissue specificity">
    <text>Expressed by the venom gland.</text>
</comment>
<comment type="domain">
    <text evidence="5">Has the structural arrangement of an alpha-helix connected to antiparallel beta-sheets by disulfide bonds (CS-alpha/beta).</text>
</comment>
<comment type="similarity">
    <text evidence="5">Belongs to the short scorpion toxin superfamily. Potassium channel inhibitor family. Alpha-KTx 06 subfamily.</text>
</comment>
<evidence type="ECO:0000250" key="1"/>
<evidence type="ECO:0000250" key="2">
    <source>
        <dbReference type="UniProtKB" id="Q10726"/>
    </source>
</evidence>
<evidence type="ECO:0000255" key="3"/>
<evidence type="ECO:0000303" key="4">
    <source>
    </source>
</evidence>
<evidence type="ECO:0000305" key="5"/>